<sequence length="308" mass="34549">MKKKFIALFSVLLLTSSLFLSSCSLPGLGGSSKDTIRIGAMATTESQIVSNILKELIEHDTGLKVEIVNNLGSTIVQHQAMLNGDVDITATRYTGTDLVGPLGEEAIKDPEKALAAVKKGFEERFHQTWFDSYGFANTYVFMVRQDTAKKYNLNTVSDMRKVENELTAGVDNSWMEREGDGYKAFSKAYDIEFKKIFPMQIGLIYTALKNNQMDVALGYSTDGRIPTYNLKLLKDDKKFFPPYDASALATDEILKKHPELKTTINKLKGKISTEEMQKLNYEADGKLKEPSIVAQEFLQKNNYFEGKN</sequence>
<protein>
    <recommendedName>
        <fullName>Carnitine transport binding protein OpuCC</fullName>
    </recommendedName>
</protein>
<gene>
    <name type="primary">opuCC</name>
</gene>
<comment type="function">
    <text evidence="2">Part of the ABC transporter complex OpuCABCD involved in carnitine uptake. Involved, with BetL and GbuABC, in osmoprotection and cryoprotection of Listeria.</text>
</comment>
<comment type="subunit">
    <text evidence="4">The complex is composed of two ATP-binding proteins (OpuCA), two transmembrane proteins (OpuCB and OpuCD) and a solute-binding protein (OpuCC).</text>
</comment>
<comment type="subcellular location">
    <subcellularLocation>
        <location evidence="1">Cell membrane</location>
        <topology evidence="1">Lipid-anchor</topology>
    </subcellularLocation>
</comment>
<comment type="similarity">
    <text evidence="3">Belongs to the OsmX family.</text>
</comment>
<feature type="signal peptide" evidence="1">
    <location>
        <begin position="1"/>
        <end position="22"/>
    </location>
</feature>
<feature type="chain" id="PRO_0000418138" description="Carnitine transport binding protein OpuCC">
    <location>
        <begin position="23"/>
        <end position="308"/>
    </location>
</feature>
<feature type="lipid moiety-binding region" description="N-palmitoyl cysteine" evidence="1">
    <location>
        <position position="23"/>
    </location>
</feature>
<feature type="lipid moiety-binding region" description="S-diacylglycerol cysteine" evidence="1">
    <location>
        <position position="23"/>
    </location>
</feature>
<dbReference type="EMBL" id="AF249729">
    <property type="protein sequence ID" value="AAF91341.1"/>
    <property type="molecule type" value="Genomic_DNA"/>
</dbReference>
<dbReference type="PIR" id="AB1253">
    <property type="entry name" value="AB1253"/>
</dbReference>
<dbReference type="RefSeq" id="WP_003721931.1">
    <property type="nucleotide sequence ID" value="NZ_WUEC01000001.1"/>
</dbReference>
<dbReference type="SMR" id="Q9KHT7"/>
<dbReference type="eggNOG" id="COG1732">
    <property type="taxonomic scope" value="Bacteria"/>
</dbReference>
<dbReference type="OMA" id="KDPAWKN"/>
<dbReference type="GO" id="GO:0043190">
    <property type="term" value="C:ATP-binding cassette (ABC) transporter complex"/>
    <property type="evidence" value="ECO:0007669"/>
    <property type="project" value="InterPro"/>
</dbReference>
<dbReference type="GO" id="GO:0022857">
    <property type="term" value="F:transmembrane transporter activity"/>
    <property type="evidence" value="ECO:0007669"/>
    <property type="project" value="InterPro"/>
</dbReference>
<dbReference type="CDD" id="cd13608">
    <property type="entry name" value="PBP2_OpuCC_like"/>
    <property type="match status" value="1"/>
</dbReference>
<dbReference type="Gene3D" id="3.40.190.120">
    <property type="entry name" value="Osmoprotection protein (prox), domain 2"/>
    <property type="match status" value="1"/>
</dbReference>
<dbReference type="Gene3D" id="3.40.190.10">
    <property type="entry name" value="Periplasmic binding protein-like II"/>
    <property type="match status" value="1"/>
</dbReference>
<dbReference type="InterPro" id="IPR007210">
    <property type="entry name" value="ABC_Gly_betaine_transp_sub-bd"/>
</dbReference>
<dbReference type="PANTHER" id="PTHR30024">
    <property type="entry name" value="ALIPHATIC SULFONATES-BINDING PROTEIN-RELATED"/>
    <property type="match status" value="1"/>
</dbReference>
<dbReference type="PANTHER" id="PTHR30024:SF44">
    <property type="entry name" value="CHOLINE-BINDING PROTEIN"/>
    <property type="match status" value="1"/>
</dbReference>
<dbReference type="Pfam" id="PF04069">
    <property type="entry name" value="OpuAC"/>
    <property type="match status" value="1"/>
</dbReference>
<dbReference type="SUPFAM" id="SSF53850">
    <property type="entry name" value="Periplasmic binding protein-like II"/>
    <property type="match status" value="1"/>
</dbReference>
<dbReference type="PROSITE" id="PS51257">
    <property type="entry name" value="PROKAR_LIPOPROTEIN"/>
    <property type="match status" value="1"/>
</dbReference>
<name>OPUCC_LISMN</name>
<proteinExistence type="evidence at protein level"/>
<organism>
    <name type="scientific">Listeria monocytogenes</name>
    <dbReference type="NCBI Taxonomy" id="1639"/>
    <lineage>
        <taxon>Bacteria</taxon>
        <taxon>Bacillati</taxon>
        <taxon>Bacillota</taxon>
        <taxon>Bacilli</taxon>
        <taxon>Bacillales</taxon>
        <taxon>Listeriaceae</taxon>
        <taxon>Listeria</taxon>
    </lineage>
</organism>
<accession>Q9KHT7</accession>
<keyword id="KW-1003">Cell membrane</keyword>
<keyword id="KW-0449">Lipoprotein</keyword>
<keyword id="KW-0472">Membrane</keyword>
<keyword id="KW-0564">Palmitate</keyword>
<keyword id="KW-0732">Signal</keyword>
<keyword id="KW-0346">Stress response</keyword>
<keyword id="KW-0813">Transport</keyword>
<evidence type="ECO:0000255" key="1">
    <source>
        <dbReference type="PROSITE-ProRule" id="PRU00303"/>
    </source>
</evidence>
<evidence type="ECO:0000269" key="2">
    <source>
    </source>
</evidence>
<evidence type="ECO:0000305" key="3"/>
<evidence type="ECO:0000305" key="4">
    <source>
    </source>
</evidence>
<reference key="1">
    <citation type="journal article" date="2000" name="Appl. Environ. Microbiol.">
        <title>Identification and characterization of an ATP binding cassette L-carnitine transporter in Listeria monocytogenes.</title>
        <authorList>
            <person name="Fraser K.R."/>
            <person name="Harvie D."/>
            <person name="Coote P.J."/>
            <person name="O'Byrne C.P."/>
        </authorList>
    </citation>
    <scope>NUCLEOTIDE SEQUENCE [GENOMIC DNA]</scope>
    <scope>FUNCTION</scope>
    <scope>SUBUNIT</scope>
    <source>
        <strain>EGD / Serotype 1/2a</strain>
    </source>
</reference>